<accession>B2SGH2</accession>
<reference key="1">
    <citation type="journal article" date="2009" name="PLoS Pathog.">
        <title>Molecular evolutionary consequences of niche restriction in Francisella tularensis, a facultative intracellular pathogen.</title>
        <authorList>
            <person name="Larsson P."/>
            <person name="Elfsmark D."/>
            <person name="Svensson K."/>
            <person name="Wikstroem P."/>
            <person name="Forsman M."/>
            <person name="Brettin T."/>
            <person name="Keim P."/>
            <person name="Johansson A."/>
        </authorList>
    </citation>
    <scope>NUCLEOTIDE SEQUENCE [LARGE SCALE GENOMIC DNA]</scope>
    <source>
        <strain>FSC147</strain>
    </source>
</reference>
<evidence type="ECO:0000255" key="1">
    <source>
        <dbReference type="HAMAP-Rule" id="MF_00503"/>
    </source>
</evidence>
<evidence type="ECO:0000305" key="2"/>
<comment type="function">
    <text evidence="1">Binds to the 23S rRNA.</text>
</comment>
<comment type="similarity">
    <text evidence="1">Belongs to the bacterial ribosomal protein bL9 family.</text>
</comment>
<gene>
    <name evidence="1" type="primary">rplI</name>
    <name type="ordered locus">FTM_0893</name>
</gene>
<feature type="chain" id="PRO_1000126918" description="Large ribosomal subunit protein bL9">
    <location>
        <begin position="1"/>
        <end position="151"/>
    </location>
</feature>
<dbReference type="EMBL" id="CP000915">
    <property type="protein sequence ID" value="ACD30831.1"/>
    <property type="molecule type" value="Genomic_DNA"/>
</dbReference>
<dbReference type="SMR" id="B2SGH2"/>
<dbReference type="KEGG" id="ftm:FTM_0893"/>
<dbReference type="HOGENOM" id="CLU_078938_4_1_6"/>
<dbReference type="GO" id="GO:1990904">
    <property type="term" value="C:ribonucleoprotein complex"/>
    <property type="evidence" value="ECO:0007669"/>
    <property type="project" value="UniProtKB-KW"/>
</dbReference>
<dbReference type="GO" id="GO:0005840">
    <property type="term" value="C:ribosome"/>
    <property type="evidence" value="ECO:0007669"/>
    <property type="project" value="UniProtKB-KW"/>
</dbReference>
<dbReference type="GO" id="GO:0019843">
    <property type="term" value="F:rRNA binding"/>
    <property type="evidence" value="ECO:0007669"/>
    <property type="project" value="UniProtKB-UniRule"/>
</dbReference>
<dbReference type="GO" id="GO:0003735">
    <property type="term" value="F:structural constituent of ribosome"/>
    <property type="evidence" value="ECO:0007669"/>
    <property type="project" value="InterPro"/>
</dbReference>
<dbReference type="GO" id="GO:0006412">
    <property type="term" value="P:translation"/>
    <property type="evidence" value="ECO:0007669"/>
    <property type="project" value="UniProtKB-UniRule"/>
</dbReference>
<dbReference type="Gene3D" id="3.10.430.100">
    <property type="entry name" value="Ribosomal protein L9, C-terminal domain"/>
    <property type="match status" value="1"/>
</dbReference>
<dbReference type="Gene3D" id="3.40.5.10">
    <property type="entry name" value="Ribosomal protein L9, N-terminal domain"/>
    <property type="match status" value="1"/>
</dbReference>
<dbReference type="HAMAP" id="MF_00503">
    <property type="entry name" value="Ribosomal_bL9"/>
    <property type="match status" value="1"/>
</dbReference>
<dbReference type="InterPro" id="IPR000244">
    <property type="entry name" value="Ribosomal_bL9"/>
</dbReference>
<dbReference type="InterPro" id="IPR009027">
    <property type="entry name" value="Ribosomal_bL9/RNase_H1_N"/>
</dbReference>
<dbReference type="InterPro" id="IPR020594">
    <property type="entry name" value="Ribosomal_bL9_bac/chp"/>
</dbReference>
<dbReference type="InterPro" id="IPR020069">
    <property type="entry name" value="Ribosomal_bL9_C"/>
</dbReference>
<dbReference type="InterPro" id="IPR036791">
    <property type="entry name" value="Ribosomal_bL9_C_sf"/>
</dbReference>
<dbReference type="InterPro" id="IPR020070">
    <property type="entry name" value="Ribosomal_bL9_N"/>
</dbReference>
<dbReference type="InterPro" id="IPR036935">
    <property type="entry name" value="Ribosomal_bL9_N_sf"/>
</dbReference>
<dbReference type="NCBIfam" id="TIGR00158">
    <property type="entry name" value="L9"/>
    <property type="match status" value="1"/>
</dbReference>
<dbReference type="PANTHER" id="PTHR21368">
    <property type="entry name" value="50S RIBOSOMAL PROTEIN L9"/>
    <property type="match status" value="1"/>
</dbReference>
<dbReference type="Pfam" id="PF03948">
    <property type="entry name" value="Ribosomal_L9_C"/>
    <property type="match status" value="1"/>
</dbReference>
<dbReference type="Pfam" id="PF01281">
    <property type="entry name" value="Ribosomal_L9_N"/>
    <property type="match status" value="1"/>
</dbReference>
<dbReference type="SUPFAM" id="SSF55658">
    <property type="entry name" value="L9 N-domain-like"/>
    <property type="match status" value="1"/>
</dbReference>
<dbReference type="SUPFAM" id="SSF55653">
    <property type="entry name" value="Ribosomal protein L9 C-domain"/>
    <property type="match status" value="1"/>
</dbReference>
<dbReference type="PROSITE" id="PS00651">
    <property type="entry name" value="RIBOSOMAL_L9"/>
    <property type="match status" value="1"/>
</dbReference>
<sequence length="151" mass="16075">MQVILKEKVENLGVLGDIVNVKPGYARNFLIPFGKAVQATQANIKAFEAQKAELEKAEKARFEAAVAVADAIKDKVYTIAAQAGEGGKLFGSVGTAEVAEAVSNQSGKKIEKSQVRMPEGVIRSIGEFELTVHVYTDVDADIKVNVVAAEA</sequence>
<name>RL9_FRATM</name>
<proteinExistence type="inferred from homology"/>
<organism>
    <name type="scientific">Francisella tularensis subsp. mediasiatica (strain FSC147)</name>
    <dbReference type="NCBI Taxonomy" id="441952"/>
    <lineage>
        <taxon>Bacteria</taxon>
        <taxon>Pseudomonadati</taxon>
        <taxon>Pseudomonadota</taxon>
        <taxon>Gammaproteobacteria</taxon>
        <taxon>Thiotrichales</taxon>
        <taxon>Francisellaceae</taxon>
        <taxon>Francisella</taxon>
    </lineage>
</organism>
<protein>
    <recommendedName>
        <fullName evidence="1">Large ribosomal subunit protein bL9</fullName>
    </recommendedName>
    <alternativeName>
        <fullName evidence="2">50S ribosomal protein L9</fullName>
    </alternativeName>
</protein>
<keyword id="KW-0687">Ribonucleoprotein</keyword>
<keyword id="KW-0689">Ribosomal protein</keyword>
<keyword id="KW-0694">RNA-binding</keyword>
<keyword id="KW-0699">rRNA-binding</keyword>